<reference key="1">
    <citation type="journal article" date="2008" name="Environ. Microbiol.">
        <title>The genome of Erwinia tasmaniensis strain Et1/99, a non-pathogenic bacterium in the genus Erwinia.</title>
        <authorList>
            <person name="Kube M."/>
            <person name="Migdoll A.M."/>
            <person name="Mueller I."/>
            <person name="Kuhl H."/>
            <person name="Beck A."/>
            <person name="Reinhardt R."/>
            <person name="Geider K."/>
        </authorList>
    </citation>
    <scope>NUCLEOTIDE SEQUENCE [LARGE SCALE GENOMIC DNA]</scope>
    <source>
        <strain>DSM 17950 / CFBP 7177 / CIP 109463 / NCPPB 4357 / Et1/99</strain>
    </source>
</reference>
<organism>
    <name type="scientific">Erwinia tasmaniensis (strain DSM 17950 / CFBP 7177 / CIP 109463 / NCPPB 4357 / Et1/99)</name>
    <dbReference type="NCBI Taxonomy" id="465817"/>
    <lineage>
        <taxon>Bacteria</taxon>
        <taxon>Pseudomonadati</taxon>
        <taxon>Pseudomonadota</taxon>
        <taxon>Gammaproteobacteria</taxon>
        <taxon>Enterobacterales</taxon>
        <taxon>Erwiniaceae</taxon>
        <taxon>Erwinia</taxon>
    </lineage>
</organism>
<proteinExistence type="inferred from homology"/>
<keyword id="KW-0030">Aminoacyl-tRNA synthetase</keyword>
<keyword id="KW-0067">ATP-binding</keyword>
<keyword id="KW-0963">Cytoplasm</keyword>
<keyword id="KW-0436">Ligase</keyword>
<keyword id="KW-0479">Metal-binding</keyword>
<keyword id="KW-0547">Nucleotide-binding</keyword>
<keyword id="KW-0648">Protein biosynthesis</keyword>
<keyword id="KW-1185">Reference proteome</keyword>
<keyword id="KW-0694">RNA-binding</keyword>
<keyword id="KW-0820">tRNA-binding</keyword>
<keyword id="KW-0862">Zinc</keyword>
<comment type="function">
    <text evidence="1">Is required not only for elongation of protein synthesis but also for the initiation of all mRNA translation through initiator tRNA(fMet) aminoacylation.</text>
</comment>
<comment type="catalytic activity">
    <reaction evidence="1">
        <text>tRNA(Met) + L-methionine + ATP = L-methionyl-tRNA(Met) + AMP + diphosphate</text>
        <dbReference type="Rhea" id="RHEA:13481"/>
        <dbReference type="Rhea" id="RHEA-COMP:9667"/>
        <dbReference type="Rhea" id="RHEA-COMP:9698"/>
        <dbReference type="ChEBI" id="CHEBI:30616"/>
        <dbReference type="ChEBI" id="CHEBI:33019"/>
        <dbReference type="ChEBI" id="CHEBI:57844"/>
        <dbReference type="ChEBI" id="CHEBI:78442"/>
        <dbReference type="ChEBI" id="CHEBI:78530"/>
        <dbReference type="ChEBI" id="CHEBI:456215"/>
        <dbReference type="EC" id="6.1.1.10"/>
    </reaction>
</comment>
<comment type="cofactor">
    <cofactor evidence="1">
        <name>Zn(2+)</name>
        <dbReference type="ChEBI" id="CHEBI:29105"/>
    </cofactor>
    <text evidence="1">Binds 1 zinc ion per subunit.</text>
</comment>
<comment type="subunit">
    <text evidence="1">Homodimer.</text>
</comment>
<comment type="subcellular location">
    <subcellularLocation>
        <location evidence="1">Cytoplasm</location>
    </subcellularLocation>
</comment>
<comment type="similarity">
    <text evidence="1">Belongs to the class-I aminoacyl-tRNA synthetase family. MetG type 1 subfamily.</text>
</comment>
<evidence type="ECO:0000255" key="1">
    <source>
        <dbReference type="HAMAP-Rule" id="MF_00098"/>
    </source>
</evidence>
<name>SYM_ERWT9</name>
<sequence length="676" mass="75705">MTQVAKKILVTCALPYANGSIHLGHMLEHIQADIWVRYQRMRGNQVYFICADDAHGTPIMLKAQQMGVAPEQMIADMSQEHQTDFAGFNISYDNYHSTHSEENRELSELIYTRLKENGFIKNRTISQLYDPEKGMFLPDRFVKGTCPNCKSPDQYGDNCEVCSATYSPTELIEPKSVVSGATPVLRDSEHFFFDLPEFSAMLQAWTRSGALQEQVANKMQEWFDSGLQQWDISRDAPYFGFEIPGAPGKYFYVWLDAPIGYMGSFKNLCDKRGDIDFDAFWQKDSDAELYHFIGKDIVYFHSLFWPAMLEGSQFRKPTNLFVHGYVTVNGAKMSKSRGTFIKASTWLQHLDADSLRYYYAAKLSSRIDDIDLNLEDFVQRVNADIVNKVVNLASRNAGFINKRFAGQLSAELADPALYQTFIDASTSIAQAWSSREFSRAVREIMALADAANRYVDEQAPWVVAKQEGRDADLQAICSMGINLFRVLMTWLKPVMPSLAERAEAFLNQPLTWDGIEQPLLNHNIAAFKALYNRIEMDKVNGLIAASKEDTAAAQPAVTGPLADDPLQETISFDDFAKVDMRIALIENAELVDGSDKLLRLTLDIGGEKRNVFSGIRAAYPDPALLVGRLTVMVANLAPRKMRFGLSEGMVMAAGPGGKDIFLLSPDSGAQPGQQVK</sequence>
<gene>
    <name evidence="1" type="primary">metG</name>
    <name type="ordered locus">ETA_12990</name>
</gene>
<feature type="chain" id="PRO_1000093715" description="Methionine--tRNA ligase">
    <location>
        <begin position="1"/>
        <end position="676"/>
    </location>
</feature>
<feature type="domain" description="tRNA-binding" evidence="1">
    <location>
        <begin position="574"/>
        <end position="676"/>
    </location>
</feature>
<feature type="short sequence motif" description="'HIGH' region">
    <location>
        <begin position="15"/>
        <end position="25"/>
    </location>
</feature>
<feature type="short sequence motif" description="'KMSKS' region">
    <location>
        <begin position="332"/>
        <end position="336"/>
    </location>
</feature>
<feature type="binding site" evidence="1">
    <location>
        <position position="146"/>
    </location>
    <ligand>
        <name>Zn(2+)</name>
        <dbReference type="ChEBI" id="CHEBI:29105"/>
    </ligand>
</feature>
<feature type="binding site" evidence="1">
    <location>
        <position position="149"/>
    </location>
    <ligand>
        <name>Zn(2+)</name>
        <dbReference type="ChEBI" id="CHEBI:29105"/>
    </ligand>
</feature>
<feature type="binding site" evidence="1">
    <location>
        <position position="159"/>
    </location>
    <ligand>
        <name>Zn(2+)</name>
        <dbReference type="ChEBI" id="CHEBI:29105"/>
    </ligand>
</feature>
<feature type="binding site" evidence="1">
    <location>
        <position position="162"/>
    </location>
    <ligand>
        <name>Zn(2+)</name>
        <dbReference type="ChEBI" id="CHEBI:29105"/>
    </ligand>
</feature>
<feature type="binding site" evidence="1">
    <location>
        <position position="335"/>
    </location>
    <ligand>
        <name>ATP</name>
        <dbReference type="ChEBI" id="CHEBI:30616"/>
    </ligand>
</feature>
<protein>
    <recommendedName>
        <fullName evidence="1">Methionine--tRNA ligase</fullName>
        <ecNumber evidence="1">6.1.1.10</ecNumber>
    </recommendedName>
    <alternativeName>
        <fullName evidence="1">Methionyl-tRNA synthetase</fullName>
        <shortName evidence="1">MetRS</shortName>
    </alternativeName>
</protein>
<dbReference type="EC" id="6.1.1.10" evidence="1"/>
<dbReference type="EMBL" id="CU468135">
    <property type="protein sequence ID" value="CAO96345.1"/>
    <property type="molecule type" value="Genomic_DNA"/>
</dbReference>
<dbReference type="SMR" id="B2VIF6"/>
<dbReference type="STRING" id="465817.ETA_12990"/>
<dbReference type="KEGG" id="eta:ETA_12990"/>
<dbReference type="eggNOG" id="COG0073">
    <property type="taxonomic scope" value="Bacteria"/>
</dbReference>
<dbReference type="eggNOG" id="COG0143">
    <property type="taxonomic scope" value="Bacteria"/>
</dbReference>
<dbReference type="HOGENOM" id="CLU_009710_7_0_6"/>
<dbReference type="OrthoDB" id="9810191at2"/>
<dbReference type="Proteomes" id="UP000001726">
    <property type="component" value="Chromosome"/>
</dbReference>
<dbReference type="GO" id="GO:0005829">
    <property type="term" value="C:cytosol"/>
    <property type="evidence" value="ECO:0007669"/>
    <property type="project" value="TreeGrafter"/>
</dbReference>
<dbReference type="GO" id="GO:0005524">
    <property type="term" value="F:ATP binding"/>
    <property type="evidence" value="ECO:0007669"/>
    <property type="project" value="UniProtKB-UniRule"/>
</dbReference>
<dbReference type="GO" id="GO:0046872">
    <property type="term" value="F:metal ion binding"/>
    <property type="evidence" value="ECO:0007669"/>
    <property type="project" value="UniProtKB-KW"/>
</dbReference>
<dbReference type="GO" id="GO:0004825">
    <property type="term" value="F:methionine-tRNA ligase activity"/>
    <property type="evidence" value="ECO:0007669"/>
    <property type="project" value="UniProtKB-UniRule"/>
</dbReference>
<dbReference type="GO" id="GO:0000049">
    <property type="term" value="F:tRNA binding"/>
    <property type="evidence" value="ECO:0007669"/>
    <property type="project" value="UniProtKB-KW"/>
</dbReference>
<dbReference type="GO" id="GO:0006431">
    <property type="term" value="P:methionyl-tRNA aminoacylation"/>
    <property type="evidence" value="ECO:0007669"/>
    <property type="project" value="UniProtKB-UniRule"/>
</dbReference>
<dbReference type="CDD" id="cd07957">
    <property type="entry name" value="Anticodon_Ia_Met"/>
    <property type="match status" value="1"/>
</dbReference>
<dbReference type="CDD" id="cd00814">
    <property type="entry name" value="MetRS_core"/>
    <property type="match status" value="1"/>
</dbReference>
<dbReference type="CDD" id="cd02800">
    <property type="entry name" value="tRNA_bind_EcMetRS_like"/>
    <property type="match status" value="1"/>
</dbReference>
<dbReference type="FunFam" id="1.10.730.10:FF:000005">
    <property type="entry name" value="Methionine--tRNA ligase"/>
    <property type="match status" value="1"/>
</dbReference>
<dbReference type="FunFam" id="2.20.28.20:FF:000001">
    <property type="entry name" value="Methionine--tRNA ligase"/>
    <property type="match status" value="1"/>
</dbReference>
<dbReference type="FunFam" id="2.40.50.140:FF:000042">
    <property type="entry name" value="Methionine--tRNA ligase"/>
    <property type="match status" value="1"/>
</dbReference>
<dbReference type="Gene3D" id="3.40.50.620">
    <property type="entry name" value="HUPs"/>
    <property type="match status" value="1"/>
</dbReference>
<dbReference type="Gene3D" id="1.10.730.10">
    <property type="entry name" value="Isoleucyl-tRNA Synthetase, Domain 1"/>
    <property type="match status" value="1"/>
</dbReference>
<dbReference type="Gene3D" id="2.20.28.20">
    <property type="entry name" value="Methionyl-tRNA synthetase, Zn-domain"/>
    <property type="match status" value="1"/>
</dbReference>
<dbReference type="Gene3D" id="2.40.50.140">
    <property type="entry name" value="Nucleic acid-binding proteins"/>
    <property type="match status" value="1"/>
</dbReference>
<dbReference type="HAMAP" id="MF_00098">
    <property type="entry name" value="Met_tRNA_synth_type1"/>
    <property type="match status" value="1"/>
</dbReference>
<dbReference type="InterPro" id="IPR001412">
    <property type="entry name" value="aa-tRNA-synth_I_CS"/>
</dbReference>
<dbReference type="InterPro" id="IPR041872">
    <property type="entry name" value="Anticodon_Met"/>
</dbReference>
<dbReference type="InterPro" id="IPR004495">
    <property type="entry name" value="Met-tRNA-synth_bsu_C"/>
</dbReference>
<dbReference type="InterPro" id="IPR023458">
    <property type="entry name" value="Met-tRNA_ligase_1"/>
</dbReference>
<dbReference type="InterPro" id="IPR014758">
    <property type="entry name" value="Met-tRNA_synth"/>
</dbReference>
<dbReference type="InterPro" id="IPR015413">
    <property type="entry name" value="Methionyl/Leucyl_tRNA_Synth"/>
</dbReference>
<dbReference type="InterPro" id="IPR033911">
    <property type="entry name" value="MetRS_core"/>
</dbReference>
<dbReference type="InterPro" id="IPR029038">
    <property type="entry name" value="MetRS_Zn"/>
</dbReference>
<dbReference type="InterPro" id="IPR012340">
    <property type="entry name" value="NA-bd_OB-fold"/>
</dbReference>
<dbReference type="InterPro" id="IPR014729">
    <property type="entry name" value="Rossmann-like_a/b/a_fold"/>
</dbReference>
<dbReference type="InterPro" id="IPR002547">
    <property type="entry name" value="tRNA-bd_dom"/>
</dbReference>
<dbReference type="InterPro" id="IPR009080">
    <property type="entry name" value="tRNAsynth_Ia_anticodon-bd"/>
</dbReference>
<dbReference type="NCBIfam" id="TIGR00398">
    <property type="entry name" value="metG"/>
    <property type="match status" value="1"/>
</dbReference>
<dbReference type="NCBIfam" id="TIGR00399">
    <property type="entry name" value="metG_C_term"/>
    <property type="match status" value="1"/>
</dbReference>
<dbReference type="NCBIfam" id="NF001100">
    <property type="entry name" value="PRK00133.1"/>
    <property type="match status" value="1"/>
</dbReference>
<dbReference type="PANTHER" id="PTHR45765">
    <property type="entry name" value="METHIONINE--TRNA LIGASE"/>
    <property type="match status" value="1"/>
</dbReference>
<dbReference type="PANTHER" id="PTHR45765:SF1">
    <property type="entry name" value="METHIONINE--TRNA LIGASE, CYTOPLASMIC"/>
    <property type="match status" value="1"/>
</dbReference>
<dbReference type="Pfam" id="PF19303">
    <property type="entry name" value="Anticodon_3"/>
    <property type="match status" value="1"/>
</dbReference>
<dbReference type="Pfam" id="PF09334">
    <property type="entry name" value="tRNA-synt_1g"/>
    <property type="match status" value="1"/>
</dbReference>
<dbReference type="Pfam" id="PF01588">
    <property type="entry name" value="tRNA_bind"/>
    <property type="match status" value="1"/>
</dbReference>
<dbReference type="PRINTS" id="PR01041">
    <property type="entry name" value="TRNASYNTHMET"/>
</dbReference>
<dbReference type="SUPFAM" id="SSF47323">
    <property type="entry name" value="Anticodon-binding domain of a subclass of class I aminoacyl-tRNA synthetases"/>
    <property type="match status" value="1"/>
</dbReference>
<dbReference type="SUPFAM" id="SSF57770">
    <property type="entry name" value="Methionyl-tRNA synthetase (MetRS), Zn-domain"/>
    <property type="match status" value="1"/>
</dbReference>
<dbReference type="SUPFAM" id="SSF50249">
    <property type="entry name" value="Nucleic acid-binding proteins"/>
    <property type="match status" value="1"/>
</dbReference>
<dbReference type="SUPFAM" id="SSF52374">
    <property type="entry name" value="Nucleotidylyl transferase"/>
    <property type="match status" value="1"/>
</dbReference>
<dbReference type="PROSITE" id="PS00178">
    <property type="entry name" value="AA_TRNA_LIGASE_I"/>
    <property type="match status" value="1"/>
</dbReference>
<dbReference type="PROSITE" id="PS50886">
    <property type="entry name" value="TRBD"/>
    <property type="match status" value="1"/>
</dbReference>
<accession>B2VIF6</accession>